<gene>
    <name type="primary">cadA</name>
    <name type="synonym">cad1</name>
    <name type="ORF">DDB_G0285793</name>
</gene>
<feature type="chain" id="PRO_0000089273" description="Calcium-dependent cell adhesion molecule 1">
    <location>
        <begin position="1"/>
        <end position="213"/>
    </location>
</feature>
<feature type="repeat" description="1">
    <location>
        <begin position="1"/>
        <end position="48"/>
    </location>
</feature>
<feature type="repeat" description="2">
    <location>
        <begin position="49"/>
        <end position="97"/>
    </location>
</feature>
<feature type="repeat" description="3">
    <location>
        <begin position="98"/>
        <end position="146"/>
    </location>
</feature>
<feature type="repeat" description="4">
    <location>
        <begin position="147"/>
        <end position="194"/>
    </location>
</feature>
<feature type="region of interest" description="4 X approximate tandem repeats">
    <location>
        <begin position="1"/>
        <end position="194"/>
    </location>
</feature>
<feature type="strand" evidence="4">
    <location>
        <begin position="8"/>
        <end position="13"/>
    </location>
</feature>
<feature type="turn" evidence="4">
    <location>
        <begin position="14"/>
        <end position="16"/>
    </location>
</feature>
<feature type="strand" evidence="4">
    <location>
        <begin position="20"/>
        <end position="23"/>
    </location>
</feature>
<feature type="strand" evidence="4">
    <location>
        <begin position="25"/>
        <end position="30"/>
    </location>
</feature>
<feature type="helix" evidence="4">
    <location>
        <begin position="36"/>
        <end position="39"/>
    </location>
</feature>
<feature type="strand" evidence="4">
    <location>
        <begin position="43"/>
        <end position="46"/>
    </location>
</feature>
<feature type="strand" evidence="4">
    <location>
        <begin position="51"/>
        <end position="56"/>
    </location>
</feature>
<feature type="strand" evidence="4">
    <location>
        <begin position="68"/>
        <end position="71"/>
    </location>
</feature>
<feature type="strand" evidence="4">
    <location>
        <begin position="73"/>
        <end position="78"/>
    </location>
</feature>
<feature type="helix" evidence="4">
    <location>
        <begin position="81"/>
        <end position="83"/>
    </location>
</feature>
<feature type="strand" evidence="4">
    <location>
        <begin position="87"/>
        <end position="92"/>
    </location>
</feature>
<feature type="strand" evidence="4">
    <location>
        <begin position="97"/>
        <end position="108"/>
    </location>
</feature>
<feature type="strand" evidence="4">
    <location>
        <begin position="115"/>
        <end position="121"/>
    </location>
</feature>
<feature type="strand" evidence="4">
    <location>
        <begin position="127"/>
        <end position="134"/>
    </location>
</feature>
<feature type="strand" evidence="4">
    <location>
        <begin position="136"/>
        <end position="140"/>
    </location>
</feature>
<feature type="strand" evidence="4">
    <location>
        <begin position="150"/>
        <end position="160"/>
    </location>
</feature>
<feature type="strand" evidence="4">
    <location>
        <begin position="165"/>
        <end position="176"/>
    </location>
</feature>
<feature type="turn" evidence="4">
    <location>
        <begin position="177"/>
        <end position="180"/>
    </location>
</feature>
<feature type="strand" evidence="4">
    <location>
        <begin position="181"/>
        <end position="185"/>
    </location>
</feature>
<feature type="turn" evidence="4">
    <location>
        <begin position="188"/>
        <end position="190"/>
    </location>
</feature>
<feature type="strand" evidence="4">
    <location>
        <begin position="193"/>
        <end position="201"/>
    </location>
</feature>
<feature type="strand" evidence="4">
    <location>
        <begin position="204"/>
        <end position="209"/>
    </location>
</feature>
<dbReference type="EMBL" id="U49650">
    <property type="protein sequence ID" value="AAC47135.1"/>
    <property type="molecule type" value="mRNA"/>
</dbReference>
<dbReference type="EMBL" id="AF340153">
    <property type="protein sequence ID" value="AAK17205.1"/>
    <property type="molecule type" value="Genomic_DNA"/>
</dbReference>
<dbReference type="EMBL" id="AAFI02000079">
    <property type="protein sequence ID" value="EAL64543.1"/>
    <property type="molecule type" value="Genomic_DNA"/>
</dbReference>
<dbReference type="EMBL" id="U20997">
    <property type="protein sequence ID" value="AAA62645.1"/>
    <property type="molecule type" value="mRNA"/>
</dbReference>
<dbReference type="RefSeq" id="XP_638048.1">
    <property type="nucleotide sequence ID" value="XM_632956.1"/>
</dbReference>
<dbReference type="PDB" id="1YHP">
    <property type="method" value="NMR"/>
    <property type="chains" value="A=2-213"/>
</dbReference>
<dbReference type="PDB" id="2B1O">
    <property type="method" value="NMR"/>
    <property type="chains" value="A=2-213"/>
</dbReference>
<dbReference type="PDBsum" id="1YHP"/>
<dbReference type="PDBsum" id="2B1O"/>
<dbReference type="BMRB" id="P54657"/>
<dbReference type="SMR" id="P54657"/>
<dbReference type="BioGRID" id="1250289">
    <property type="interactions" value="1"/>
</dbReference>
<dbReference type="DIP" id="DIP-29248N"/>
<dbReference type="FunCoup" id="P54657">
    <property type="interactions" value="1"/>
</dbReference>
<dbReference type="IntAct" id="P54657">
    <property type="interactions" value="1"/>
</dbReference>
<dbReference type="MINT" id="P54657"/>
<dbReference type="STRING" id="44689.P54657"/>
<dbReference type="GlyGen" id="P54657">
    <property type="glycosylation" value="1 site"/>
</dbReference>
<dbReference type="PaxDb" id="44689-DDB0191175"/>
<dbReference type="EnsemblProtists" id="EAL64543">
    <property type="protein sequence ID" value="EAL64543"/>
    <property type="gene ID" value="DDB_G0285793"/>
</dbReference>
<dbReference type="GeneID" id="8625286"/>
<dbReference type="KEGG" id="ddi:DDB_G0285793"/>
<dbReference type="dictyBase" id="DDB_G0285793">
    <property type="gene designation" value="cadA"/>
</dbReference>
<dbReference type="VEuPathDB" id="AmoebaDB:DDB_G0285793"/>
<dbReference type="eggNOG" id="ENOG502SGUC">
    <property type="taxonomic scope" value="Eukaryota"/>
</dbReference>
<dbReference type="HOGENOM" id="CLU_1362582_0_0_1"/>
<dbReference type="InParanoid" id="P54657"/>
<dbReference type="OMA" id="ESEIVCQ"/>
<dbReference type="PhylomeDB" id="P54657"/>
<dbReference type="EvolutionaryTrace" id="P54657"/>
<dbReference type="PRO" id="PR:P54657"/>
<dbReference type="Proteomes" id="UP000002195">
    <property type="component" value="Chromosome 4"/>
</dbReference>
<dbReference type="GO" id="GO:0005938">
    <property type="term" value="C:cell cortex"/>
    <property type="evidence" value="ECO:0000304"/>
    <property type="project" value="dictyBase"/>
</dbReference>
<dbReference type="GO" id="GO:0071944">
    <property type="term" value="C:cell periphery"/>
    <property type="evidence" value="ECO:0000314"/>
    <property type="project" value="dictyBase"/>
</dbReference>
<dbReference type="GO" id="GO:0005911">
    <property type="term" value="C:cell-cell junction"/>
    <property type="evidence" value="ECO:0000314"/>
    <property type="project" value="dictyBase"/>
</dbReference>
<dbReference type="GO" id="GO:0000331">
    <property type="term" value="C:contractile vacuole"/>
    <property type="evidence" value="ECO:0000314"/>
    <property type="project" value="dictyBase"/>
</dbReference>
<dbReference type="GO" id="GO:0005737">
    <property type="term" value="C:cytoplasm"/>
    <property type="evidence" value="ECO:0000314"/>
    <property type="project" value="dictyBase"/>
</dbReference>
<dbReference type="GO" id="GO:0030139">
    <property type="term" value="C:endocytic vesicle"/>
    <property type="evidence" value="ECO:0000314"/>
    <property type="project" value="dictyBase"/>
</dbReference>
<dbReference type="GO" id="GO:0009897">
    <property type="term" value="C:external side of plasma membrane"/>
    <property type="evidence" value="ECO:0000314"/>
    <property type="project" value="dictyBase"/>
</dbReference>
<dbReference type="GO" id="GO:0031012">
    <property type="term" value="C:extracellular matrix"/>
    <property type="evidence" value="ECO:0000314"/>
    <property type="project" value="dictyBase"/>
</dbReference>
<dbReference type="GO" id="GO:0005576">
    <property type="term" value="C:extracellular region"/>
    <property type="evidence" value="ECO:0000314"/>
    <property type="project" value="dictyBase"/>
</dbReference>
<dbReference type="GO" id="GO:0030175">
    <property type="term" value="C:filopodium"/>
    <property type="evidence" value="ECO:0000314"/>
    <property type="project" value="dictyBase"/>
</dbReference>
<dbReference type="GO" id="GO:0030027">
    <property type="term" value="C:lamellipodium"/>
    <property type="evidence" value="ECO:0000314"/>
    <property type="project" value="dictyBase"/>
</dbReference>
<dbReference type="GO" id="GO:0005811">
    <property type="term" value="C:lipid droplet"/>
    <property type="evidence" value="ECO:0007005"/>
    <property type="project" value="dictyBase"/>
</dbReference>
<dbReference type="GO" id="GO:0045335">
    <property type="term" value="C:phagocytic vesicle"/>
    <property type="evidence" value="ECO:0007005"/>
    <property type="project" value="dictyBase"/>
</dbReference>
<dbReference type="GO" id="GO:0005886">
    <property type="term" value="C:plasma membrane"/>
    <property type="evidence" value="ECO:0000314"/>
    <property type="project" value="dictyBase"/>
</dbReference>
<dbReference type="GO" id="GO:0001726">
    <property type="term" value="C:ruffle"/>
    <property type="evidence" value="ECO:0000314"/>
    <property type="project" value="dictyBase"/>
</dbReference>
<dbReference type="GO" id="GO:0005509">
    <property type="term" value="F:calcium ion binding"/>
    <property type="evidence" value="ECO:0000314"/>
    <property type="project" value="dictyBase"/>
</dbReference>
<dbReference type="GO" id="GO:0005516">
    <property type="term" value="F:calmodulin binding"/>
    <property type="evidence" value="ECO:0000353"/>
    <property type="project" value="dictyBase"/>
</dbReference>
<dbReference type="GO" id="GO:0042802">
    <property type="term" value="F:identical protein binding"/>
    <property type="evidence" value="ECO:0000353"/>
    <property type="project" value="IntAct"/>
</dbReference>
<dbReference type="GO" id="GO:0031152">
    <property type="term" value="P:aggregation involved in sorocarp development"/>
    <property type="evidence" value="ECO:0000304"/>
    <property type="project" value="dictyBase"/>
</dbReference>
<dbReference type="GO" id="GO:0051702">
    <property type="term" value="P:biological process involved in interaction with symbiont"/>
    <property type="evidence" value="ECO:0000314"/>
    <property type="project" value="dictyBase"/>
</dbReference>
<dbReference type="GO" id="GO:0016339">
    <property type="term" value="P:calcium-dependent cell-cell adhesion via plasma membrane cell adhesion molecules"/>
    <property type="evidence" value="ECO:0000314"/>
    <property type="project" value="dictyBase"/>
</dbReference>
<dbReference type="GO" id="GO:0050829">
    <property type="term" value="P:defense response to Gram-negative bacterium"/>
    <property type="evidence" value="ECO:0000315"/>
    <property type="project" value="dictyBase"/>
</dbReference>
<dbReference type="GO" id="GO:0007157">
    <property type="term" value="P:heterophilic cell-cell adhesion via plasma membrane cell adhesion molecules"/>
    <property type="evidence" value="ECO:0000314"/>
    <property type="project" value="dictyBase"/>
</dbReference>
<dbReference type="GO" id="GO:0010468">
    <property type="term" value="P:regulation of gene expression"/>
    <property type="evidence" value="ECO:0000314"/>
    <property type="project" value="dictyBase"/>
</dbReference>
<dbReference type="GO" id="GO:1904643">
    <property type="term" value="P:response to curcumin"/>
    <property type="evidence" value="ECO:0000314"/>
    <property type="project" value="dictyBase"/>
</dbReference>
<dbReference type="GO" id="GO:0030587">
    <property type="term" value="P:sorocarp development"/>
    <property type="evidence" value="ECO:0000315"/>
    <property type="project" value="dictyBase"/>
</dbReference>
<dbReference type="GO" id="GO:0031288">
    <property type="term" value="P:sorocarp morphogenesis"/>
    <property type="evidence" value="ECO:0000315"/>
    <property type="project" value="dictyBase"/>
</dbReference>
<dbReference type="FunFam" id="2.60.20.10:FF:000018">
    <property type="entry name" value="Calcium-dependent cell adhesion molecule 1"/>
    <property type="match status" value="1"/>
</dbReference>
<dbReference type="FunFam" id="2.60.40.1720:FF:000001">
    <property type="entry name" value="Calcium-dependent cell adhesion molecule 1"/>
    <property type="match status" value="1"/>
</dbReference>
<dbReference type="Gene3D" id="2.60.40.1720">
    <property type="entry name" value="Calcium-dependent cell adhesion molecule-1"/>
    <property type="match status" value="1"/>
</dbReference>
<dbReference type="Gene3D" id="2.60.20.10">
    <property type="entry name" value="Crystallins"/>
    <property type="match status" value="1"/>
</dbReference>
<dbReference type="InterPro" id="IPR015059">
    <property type="entry name" value="Ca_cell_adhesion_N_dom"/>
</dbReference>
<dbReference type="InterPro" id="IPR038423">
    <property type="entry name" value="CAD_C_sf"/>
</dbReference>
<dbReference type="InterPro" id="IPR052885">
    <property type="entry name" value="Dictyostelium_CAD"/>
</dbReference>
<dbReference type="InterPro" id="IPR011024">
    <property type="entry name" value="G_crystallin-like"/>
</dbReference>
<dbReference type="InterPro" id="IPR029283">
    <property type="entry name" value="Membrane-bd"/>
</dbReference>
<dbReference type="PANTHER" id="PTHR38083">
    <property type="entry name" value="CALCIUM-DEPENDENT CELL ADHESION MOLECULE 1-RELATED"/>
    <property type="match status" value="1"/>
</dbReference>
<dbReference type="PANTHER" id="PTHR38083:SF1">
    <property type="entry name" value="CALCIUM-DEPENDENT CELL ADHESION MOLECULE 1-RELATED"/>
    <property type="match status" value="1"/>
</dbReference>
<dbReference type="Pfam" id="PF08964">
    <property type="entry name" value="Crystall_3"/>
    <property type="match status" value="1"/>
</dbReference>
<dbReference type="Pfam" id="PF14564">
    <property type="entry name" value="Membrane_bind"/>
    <property type="match status" value="1"/>
</dbReference>
<dbReference type="SUPFAM" id="SSF49695">
    <property type="entry name" value="gamma-Crystallin-like"/>
    <property type="match status" value="1"/>
</dbReference>
<comment type="function">
    <text evidence="2">Mediates calcium-dependent cell-cell adhesion during the early stage of development.</text>
</comment>
<comment type="interaction">
    <interactant intactId="EBI-8446773">
        <id>P54657</id>
    </interactant>
    <interactant intactId="EBI-8446773">
        <id>P54657</id>
        <label>cadA</label>
    </interactant>
    <organismsDiffer>false</organismsDiffer>
    <experiments>2</experiments>
</comment>
<comment type="interaction">
    <interactant intactId="EBI-8446773">
        <id>P54657</id>
    </interactant>
    <interactant intactId="EBI-1808395">
        <id>P02599</id>
        <label>calA</label>
    </interactant>
    <organismsDiffer>false</organismsDiffer>
    <experiments>4</experiments>
</comment>
<comment type="subcellular location">
    <subcellularLocation>
        <location evidence="2">Cell membrane</location>
    </subcellularLocation>
    <text>Associated with the ecto-surface of the plasma membrane. May be transported to the plasma membrane via contractile vacuoles and its cell surface association may be mediated by an integral membrane protein.</text>
</comment>
<comment type="developmental stage">
    <text evidence="2">Expressed soon after the initiation of development.</text>
</comment>
<comment type="induction">
    <text evidence="1">Expression is controlled by rpkA.</text>
</comment>
<comment type="domain">
    <text>Cell binding activity is dependent on the N-terminal segment whereas the C-terminal domain tethers the protein to the cell membrane.</text>
</comment>
<comment type="PTM">
    <text>The N-terminus is blocked.</text>
</comment>
<comment type="similarity">
    <text evidence="3">Belongs to the Dictyostelium CAD family.</text>
</comment>
<reference key="1">
    <citation type="journal article" date="1996" name="J. Biol. Chem.">
        <title>Molecular cloning and characterization of DdCAD-1, a Ca2+-dependent cell-cell adhesion molecule, in Dictyostelium discoideum.</title>
        <authorList>
            <person name="Wong E.F.S."/>
            <person name="Brar S.K."/>
            <person name="Sesaki H."/>
            <person name="Yang C."/>
            <person name="Siu C.-H."/>
        </authorList>
    </citation>
    <scope>NUCLEOTIDE SEQUENCE [MRNA]</scope>
    <scope>PROTEIN SEQUENCE OF 43-62 AND 118-133</scope>
    <scope>FUNCTION</scope>
    <scope>SUBCELLULAR LOCATION</scope>
    <scope>DEVELOPMENTAL STAGE</scope>
</reference>
<reference key="2">
    <citation type="submission" date="2001-01" db="EMBL/GenBank/DDBJ databases">
        <title>Cloning, regulation, and promoter analysis of the cadA gene in Dictyostelium discoideum.</title>
        <authorList>
            <person name="Yang C."/>
            <person name="Siu C.-H."/>
        </authorList>
    </citation>
    <scope>NUCLEOTIDE SEQUENCE [GENOMIC DNA]</scope>
</reference>
<reference key="3">
    <citation type="journal article" date="2005" name="Nature">
        <title>The genome of the social amoeba Dictyostelium discoideum.</title>
        <authorList>
            <person name="Eichinger L."/>
            <person name="Pachebat J.A."/>
            <person name="Gloeckner G."/>
            <person name="Rajandream M.A."/>
            <person name="Sucgang R."/>
            <person name="Berriman M."/>
            <person name="Song J."/>
            <person name="Olsen R."/>
            <person name="Szafranski K."/>
            <person name="Xu Q."/>
            <person name="Tunggal B."/>
            <person name="Kummerfeld S."/>
            <person name="Madera M."/>
            <person name="Konfortov B.A."/>
            <person name="Rivero F."/>
            <person name="Bankier A.T."/>
            <person name="Lehmann R."/>
            <person name="Hamlin N."/>
            <person name="Davies R."/>
            <person name="Gaudet P."/>
            <person name="Fey P."/>
            <person name="Pilcher K."/>
            <person name="Chen G."/>
            <person name="Saunders D."/>
            <person name="Sodergren E.J."/>
            <person name="Davis P."/>
            <person name="Kerhornou A."/>
            <person name="Nie X."/>
            <person name="Hall N."/>
            <person name="Anjard C."/>
            <person name="Hemphill L."/>
            <person name="Bason N."/>
            <person name="Farbrother P."/>
            <person name="Desany B."/>
            <person name="Just E."/>
            <person name="Morio T."/>
            <person name="Rost R."/>
            <person name="Churcher C.M."/>
            <person name="Cooper J."/>
            <person name="Haydock S."/>
            <person name="van Driessche N."/>
            <person name="Cronin A."/>
            <person name="Goodhead I."/>
            <person name="Muzny D.M."/>
            <person name="Mourier T."/>
            <person name="Pain A."/>
            <person name="Lu M."/>
            <person name="Harper D."/>
            <person name="Lindsay R."/>
            <person name="Hauser H."/>
            <person name="James K.D."/>
            <person name="Quiles M."/>
            <person name="Madan Babu M."/>
            <person name="Saito T."/>
            <person name="Buchrieser C."/>
            <person name="Wardroper A."/>
            <person name="Felder M."/>
            <person name="Thangavelu M."/>
            <person name="Johnson D."/>
            <person name="Knights A."/>
            <person name="Loulseged H."/>
            <person name="Mungall K.L."/>
            <person name="Oliver K."/>
            <person name="Price C."/>
            <person name="Quail M.A."/>
            <person name="Urushihara H."/>
            <person name="Hernandez J."/>
            <person name="Rabbinowitsch E."/>
            <person name="Steffen D."/>
            <person name="Sanders M."/>
            <person name="Ma J."/>
            <person name="Kohara Y."/>
            <person name="Sharp S."/>
            <person name="Simmonds M.N."/>
            <person name="Spiegler S."/>
            <person name="Tivey A."/>
            <person name="Sugano S."/>
            <person name="White B."/>
            <person name="Walker D."/>
            <person name="Woodward J.R."/>
            <person name="Winckler T."/>
            <person name="Tanaka Y."/>
            <person name="Shaulsky G."/>
            <person name="Schleicher M."/>
            <person name="Weinstock G.M."/>
            <person name="Rosenthal A."/>
            <person name="Cox E.C."/>
            <person name="Chisholm R.L."/>
            <person name="Gibbs R.A."/>
            <person name="Loomis W.F."/>
            <person name="Platzer M."/>
            <person name="Kay R.R."/>
            <person name="Williams J.G."/>
            <person name="Dear P.H."/>
            <person name="Noegel A.A."/>
            <person name="Barrell B.G."/>
            <person name="Kuspa A."/>
        </authorList>
    </citation>
    <scope>NUCLEOTIDE SEQUENCE [LARGE SCALE GENOMIC DNA]</scope>
    <source>
        <strain>AX4</strain>
    </source>
</reference>
<reference key="4">
    <citation type="submission" date="1995-02" db="EMBL/GenBank/DDBJ databases">
        <title>Cloning of a putative 25 kDa protein from Dictyostelium discoideum.</title>
        <authorList>
            <person name="Winckler T."/>
        </authorList>
    </citation>
    <scope>NUCLEOTIDE SEQUENCE [MRNA] OF 4-193</scope>
    <source>
        <strain>AX2</strain>
    </source>
</reference>
<reference key="5">
    <citation type="journal article" date="2006" name="Mol. Cell. Proteomics">
        <title>Proteomics fingerprinting of phagosome maturation and evidence for the role of a Galpha during uptake.</title>
        <authorList>
            <person name="Gotthardt D."/>
            <person name="Blancheteau V."/>
            <person name="Bosserhoff A."/>
            <person name="Ruppert T."/>
            <person name="Delorenzi M."/>
            <person name="Soldati T."/>
        </authorList>
    </citation>
    <scope>IDENTIFICATION BY MASS SPECTROMETRY [LARGE SCALE ANALYSIS]</scope>
    <source>
        <strain>AX2</strain>
    </source>
</reference>
<reference key="6">
    <citation type="journal article" date="2007" name="Curr. Biol.">
        <title>A G protein-coupled receptor with a lipid kinase domain is involved in cell-density sensing.</title>
        <authorList>
            <person name="Bakthavatsalam D."/>
            <person name="Brazill D."/>
            <person name="Gomer R.H."/>
            <person name="Eichinger L."/>
            <person name="Rivero F."/>
            <person name="Noegel A.A."/>
        </authorList>
    </citation>
    <scope>INDUCTION</scope>
</reference>
<reference key="7">
    <citation type="journal article" date="2006" name="Nat. Struct. Mol. Biol.">
        <title>Solution structures of the adhesion molecule DdCAD-1 reveal new insights into Ca(2+)-dependent cell-cell adhesion.</title>
        <authorList>
            <person name="Lin Z."/>
            <person name="Sriskanthadevan S."/>
            <person name="Huang H."/>
            <person name="Siu C.-H."/>
            <person name="Yang D."/>
        </authorList>
    </citation>
    <scope>STRUCTURE BY NMR</scope>
</reference>
<keyword id="KW-0002">3D-structure</keyword>
<keyword id="KW-0106">Calcium</keyword>
<keyword id="KW-0130">Cell adhesion</keyword>
<keyword id="KW-1003">Cell membrane</keyword>
<keyword id="KW-0903">Direct protein sequencing</keyword>
<keyword id="KW-0472">Membrane</keyword>
<keyword id="KW-1185">Reference proteome</keyword>
<keyword id="KW-0677">Repeat</keyword>
<proteinExistence type="evidence at protein level"/>
<sequence>MSVDANKVKFFFGKNCTGESFEYNKGETVRFNNGDKWNDKFMSCLVGSNVRCNIWEHNEIDTPTPGKFQELAQGSTNNDLTSINGLSKFQVLPGAFQWAVDVKIVNKVNSTAGSYEMTITPYQVDKVACKDGDDFVQLPIPKLTPPDSEIVSHLTVRQTHTPYDYVVNGSVYFKYSPTTGQVTVIKKDETFPKNMTVTQDDNTSFIFNLNSEK</sequence>
<organism>
    <name type="scientific">Dictyostelium discoideum</name>
    <name type="common">Social amoeba</name>
    <dbReference type="NCBI Taxonomy" id="44689"/>
    <lineage>
        <taxon>Eukaryota</taxon>
        <taxon>Amoebozoa</taxon>
        <taxon>Evosea</taxon>
        <taxon>Eumycetozoa</taxon>
        <taxon>Dictyostelia</taxon>
        <taxon>Dictyosteliales</taxon>
        <taxon>Dictyosteliaceae</taxon>
        <taxon>Dictyostelium</taxon>
    </lineage>
</organism>
<protein>
    <recommendedName>
        <fullName>Calcium-dependent cell adhesion molecule 1</fullName>
        <shortName>CAD-1</shortName>
        <shortName>DdCAD-1</shortName>
    </recommendedName>
    <alternativeName>
        <fullName>GP24</fullName>
    </alternativeName>
</protein>
<accession>P54657</accession>
<accession>Q23855</accession>
<accession>Q54MQ4</accession>
<name>CAD1_DICDI</name>
<evidence type="ECO:0000269" key="1">
    <source>
    </source>
</evidence>
<evidence type="ECO:0000269" key="2">
    <source>
    </source>
</evidence>
<evidence type="ECO:0000305" key="3"/>
<evidence type="ECO:0007829" key="4">
    <source>
        <dbReference type="PDB" id="1YHP"/>
    </source>
</evidence>